<feature type="signal peptide" evidence="3">
    <location>
        <begin position="1"/>
        <end position="25"/>
    </location>
</feature>
<feature type="chain" id="PRO_0000011821" description="Probable xyloglucan endotransglucosylase/hydrolase protein 21">
    <location>
        <begin position="26"/>
        <end position="305"/>
    </location>
</feature>
<feature type="domain" description="GH16" evidence="4">
    <location>
        <begin position="26"/>
        <end position="216"/>
    </location>
</feature>
<feature type="region of interest" description="Disordered" evidence="6">
    <location>
        <begin position="236"/>
        <end position="258"/>
    </location>
</feature>
<feature type="compositionally biased region" description="Low complexity" evidence="6">
    <location>
        <begin position="236"/>
        <end position="253"/>
    </location>
</feature>
<feature type="active site" description="Nucleophile" evidence="5">
    <location>
        <position position="102"/>
    </location>
</feature>
<feature type="active site" description="Proton donor" evidence="5">
    <location>
        <position position="106"/>
    </location>
</feature>
<feature type="binding site" evidence="2">
    <location>
        <position position="106"/>
    </location>
    <ligand>
        <name>xyloglucan</name>
        <dbReference type="ChEBI" id="CHEBI:18233"/>
    </ligand>
</feature>
<feature type="binding site" evidence="2">
    <location>
        <begin position="119"/>
        <end position="121"/>
    </location>
    <ligand>
        <name>xyloglucan</name>
        <dbReference type="ChEBI" id="CHEBI:18233"/>
    </ligand>
</feature>
<feature type="binding site" evidence="2">
    <location>
        <begin position="129"/>
        <end position="131"/>
    </location>
    <ligand>
        <name>xyloglucan</name>
        <dbReference type="ChEBI" id="CHEBI:18233"/>
    </ligand>
</feature>
<feature type="binding site" evidence="2">
    <location>
        <begin position="195"/>
        <end position="196"/>
    </location>
    <ligand>
        <name>xyloglucan</name>
        <dbReference type="ChEBI" id="CHEBI:18233"/>
    </ligand>
</feature>
<feature type="binding site" evidence="2">
    <location>
        <position position="200"/>
    </location>
    <ligand>
        <name>xyloglucan</name>
        <dbReference type="ChEBI" id="CHEBI:18233"/>
    </ligand>
</feature>
<feature type="binding site" evidence="2">
    <location>
        <position position="287"/>
    </location>
    <ligand>
        <name>xyloglucan</name>
        <dbReference type="ChEBI" id="CHEBI:18233"/>
    </ligand>
</feature>
<feature type="site" description="Important for catalytic activity" evidence="2">
    <location>
        <position position="104"/>
    </location>
</feature>
<feature type="glycosylation site" description="N-linked (GlcNAc...) asparagine" evidence="3">
    <location>
        <position position="46"/>
    </location>
</feature>
<feature type="glycosylation site" description="N-linked (GlcNAc...) asparagine" evidence="3">
    <location>
        <position position="110"/>
    </location>
</feature>
<feature type="glycosylation site" description="N-linked (GlcNAc...) asparagine" evidence="3">
    <location>
        <position position="146"/>
    </location>
</feature>
<feature type="glycosylation site" description="N-linked (GlcNAc...) asparagine" evidence="3">
    <location>
        <position position="206"/>
    </location>
</feature>
<feature type="glycosylation site" description="N-linked (GlcNAc...) asparagine" evidence="3">
    <location>
        <position position="231"/>
    </location>
</feature>
<feature type="disulfide bond" evidence="2">
    <location>
        <begin position="225"/>
        <end position="239"/>
    </location>
</feature>
<feature type="disulfide bond" evidence="2">
    <location>
        <begin position="282"/>
        <end position="296"/>
    </location>
</feature>
<accession>Q9ZV40</accession>
<evidence type="ECO:0000250" key="1"/>
<evidence type="ECO:0000250" key="2">
    <source>
        <dbReference type="UniProtKB" id="Q8GZD5"/>
    </source>
</evidence>
<evidence type="ECO:0000255" key="3"/>
<evidence type="ECO:0000255" key="4">
    <source>
        <dbReference type="PROSITE-ProRule" id="PRU01098"/>
    </source>
</evidence>
<evidence type="ECO:0000255" key="5">
    <source>
        <dbReference type="PROSITE-ProRule" id="PRU10064"/>
    </source>
</evidence>
<evidence type="ECO:0000256" key="6">
    <source>
        <dbReference type="SAM" id="MobiDB-lite"/>
    </source>
</evidence>
<evidence type="ECO:0000269" key="7">
    <source>
    </source>
</evidence>
<evidence type="ECO:0000305" key="8"/>
<organism>
    <name type="scientific">Arabidopsis thaliana</name>
    <name type="common">Mouse-ear cress</name>
    <dbReference type="NCBI Taxonomy" id="3702"/>
    <lineage>
        <taxon>Eukaryota</taxon>
        <taxon>Viridiplantae</taxon>
        <taxon>Streptophyta</taxon>
        <taxon>Embryophyta</taxon>
        <taxon>Tracheophyta</taxon>
        <taxon>Spermatophyta</taxon>
        <taxon>Magnoliopsida</taxon>
        <taxon>eudicotyledons</taxon>
        <taxon>Gunneridae</taxon>
        <taxon>Pentapetalae</taxon>
        <taxon>rosids</taxon>
        <taxon>malvids</taxon>
        <taxon>Brassicales</taxon>
        <taxon>Brassicaceae</taxon>
        <taxon>Camelineae</taxon>
        <taxon>Arabidopsis</taxon>
    </lineage>
</organism>
<comment type="function">
    <text evidence="1">Catalyzes xyloglucan endohydrolysis (XEH) and/or endotransglycosylation (XET). Cleaves and religates xyloglucan polymers, an essential constituent of the primary cell wall, and thereby participates in cell wall construction of growing tissues (By similarity).</text>
</comment>
<comment type="catalytic activity">
    <reaction>
        <text>breaks a beta-(1-&gt;4) bond in the backbone of a xyloglucan and transfers the xyloglucanyl segment on to O-4 of the non-reducing terminal glucose residue of an acceptor, which can be a xyloglucan or an oligosaccharide of xyloglucan.</text>
        <dbReference type="EC" id="2.4.1.207"/>
    </reaction>
</comment>
<comment type="subcellular location">
    <subcellularLocation>
        <location evidence="8">Secreted</location>
        <location evidence="8">Cell wall</location>
    </subcellularLocation>
    <subcellularLocation>
        <location evidence="8">Secreted</location>
        <location evidence="8">Extracellular space</location>
        <location evidence="8">Apoplast</location>
    </subcellularLocation>
</comment>
<comment type="tissue specificity">
    <text evidence="7">Predominantly expressed in green siliques.</text>
</comment>
<comment type="induction">
    <text evidence="7">Down-regulated by auxin.</text>
</comment>
<comment type="PTM">
    <text evidence="1">Contains at least one intrachain disulfide bond essential for its enzymatic activity.</text>
</comment>
<comment type="similarity">
    <text evidence="8">Belongs to the glycosyl hydrolase 16 family. XTH group 2 subfamily.</text>
</comment>
<name>XTH21_ARATH</name>
<sequence>MVSSTLLVMSISLFLGLSILLVVHGKDFNQDIDITWGDGRGNILNNGTLLNLGLDQSSGSGFQSKAEYLYGKVDMQIKLVPGNSAGTVTTFYLKSQGLTWDEIDFEFLGNVSGDPYIVHTNVYTQGKGDREQQFYLWFDPTAAFHNYSILWNPSHIVFYIDGKPIREFKNLEVLGVAYPKNQPMRMYGSLWNADDWATRGGLVKTNWSQGPFVASFMNYNSENACVWSIVNGTTTTSPCSPGDSTSSSSSSTSEWFSQRGMDSSSKKVLRWVQRKFMVYNYCKDKKRFSNGLPVECTAKNKNTKS</sequence>
<protein>
    <recommendedName>
        <fullName>Probable xyloglucan endotransglucosylase/hydrolase protein 21</fullName>
        <shortName>At-XTH21</shortName>
        <shortName>XTH-21</shortName>
        <ecNumber>2.4.1.207</ecNumber>
    </recommendedName>
</protein>
<reference key="1">
    <citation type="journal article" date="1999" name="Nature">
        <title>Sequence and analysis of chromosome 2 of the plant Arabidopsis thaliana.</title>
        <authorList>
            <person name="Lin X."/>
            <person name="Kaul S."/>
            <person name="Rounsley S.D."/>
            <person name="Shea T.P."/>
            <person name="Benito M.-I."/>
            <person name="Town C.D."/>
            <person name="Fujii C.Y."/>
            <person name="Mason T.M."/>
            <person name="Bowman C.L."/>
            <person name="Barnstead M.E."/>
            <person name="Feldblyum T.V."/>
            <person name="Buell C.R."/>
            <person name="Ketchum K.A."/>
            <person name="Lee J.J."/>
            <person name="Ronning C.M."/>
            <person name="Koo H.L."/>
            <person name="Moffat K.S."/>
            <person name="Cronin L.A."/>
            <person name="Shen M."/>
            <person name="Pai G."/>
            <person name="Van Aken S."/>
            <person name="Umayam L."/>
            <person name="Tallon L.J."/>
            <person name="Gill J.E."/>
            <person name="Adams M.D."/>
            <person name="Carrera A.J."/>
            <person name="Creasy T.H."/>
            <person name="Goodman H.M."/>
            <person name="Somerville C.R."/>
            <person name="Copenhaver G.P."/>
            <person name="Preuss D."/>
            <person name="Nierman W.C."/>
            <person name="White O."/>
            <person name="Eisen J.A."/>
            <person name="Salzberg S.L."/>
            <person name="Fraser C.M."/>
            <person name="Venter J.C."/>
        </authorList>
    </citation>
    <scope>NUCLEOTIDE SEQUENCE [LARGE SCALE GENOMIC DNA]</scope>
    <source>
        <strain>cv. Columbia</strain>
    </source>
</reference>
<reference key="2">
    <citation type="journal article" date="2017" name="Plant J.">
        <title>Araport11: a complete reannotation of the Arabidopsis thaliana reference genome.</title>
        <authorList>
            <person name="Cheng C.Y."/>
            <person name="Krishnakumar V."/>
            <person name="Chan A.P."/>
            <person name="Thibaud-Nissen F."/>
            <person name="Schobel S."/>
            <person name="Town C.D."/>
        </authorList>
    </citation>
    <scope>GENOME REANNOTATION</scope>
    <source>
        <strain>cv. Columbia</strain>
    </source>
</reference>
<reference key="3">
    <citation type="journal article" date="2001" name="Plant Cell Physiol.">
        <title>A comprehensive expression analysis of all members of a gene family encoding cell-wall enzymes allowed us to predict cis-regulatory regions involved in cell-wall construction in specific organs of Arabidopsis.</title>
        <authorList>
            <person name="Yokoyama R."/>
            <person name="Nishitani K."/>
        </authorList>
    </citation>
    <scope>TISSUE SPECIFICITY</scope>
    <scope>INDUCTION</scope>
</reference>
<reference key="4">
    <citation type="journal article" date="2002" name="Plant Cell Physiol.">
        <title>The XTH family of enzymes involved in xyloglucan endotransglucosylation and endohydrolysis: current perspectives and a new unifying nomenclature.</title>
        <authorList>
            <person name="Rose J.K.C."/>
            <person name="Braam J."/>
            <person name="Fry S.C."/>
            <person name="Nishitani K."/>
        </authorList>
    </citation>
    <scope>NOMENCLATURE</scope>
</reference>
<gene>
    <name type="primary">XTH21</name>
    <name type="synonym">XTR17</name>
    <name type="ordered locus">At2g18800</name>
    <name type="ORF">MSF3.18</name>
</gene>
<dbReference type="EC" id="2.4.1.207"/>
<dbReference type="EMBL" id="AC005724">
    <property type="protein sequence ID" value="AAD08949.1"/>
    <property type="molecule type" value="Genomic_DNA"/>
</dbReference>
<dbReference type="EMBL" id="CP002685">
    <property type="protein sequence ID" value="AEC06809.1"/>
    <property type="molecule type" value="Genomic_DNA"/>
</dbReference>
<dbReference type="PIR" id="G84568">
    <property type="entry name" value="G84568"/>
</dbReference>
<dbReference type="RefSeq" id="NP_179470.1">
    <property type="nucleotide sequence ID" value="NM_127436.2"/>
</dbReference>
<dbReference type="SMR" id="Q9ZV40"/>
<dbReference type="FunCoup" id="Q9ZV40">
    <property type="interactions" value="39"/>
</dbReference>
<dbReference type="STRING" id="3702.Q9ZV40"/>
<dbReference type="CAZy" id="GH16">
    <property type="family name" value="Glycoside Hydrolase Family 16"/>
</dbReference>
<dbReference type="GlyCosmos" id="Q9ZV40">
    <property type="glycosylation" value="5 sites, No reported glycans"/>
</dbReference>
<dbReference type="GlyGen" id="Q9ZV40">
    <property type="glycosylation" value="5 sites"/>
</dbReference>
<dbReference type="iPTMnet" id="Q9ZV40"/>
<dbReference type="PaxDb" id="3702-AT2G18800.1"/>
<dbReference type="ProteomicsDB" id="242403"/>
<dbReference type="EnsemblPlants" id="AT2G18800.1">
    <property type="protein sequence ID" value="AT2G18800.1"/>
    <property type="gene ID" value="AT2G18800"/>
</dbReference>
<dbReference type="GeneID" id="816395"/>
<dbReference type="Gramene" id="AT2G18800.1">
    <property type="protein sequence ID" value="AT2G18800.1"/>
    <property type="gene ID" value="AT2G18800"/>
</dbReference>
<dbReference type="KEGG" id="ath:AT2G18800"/>
<dbReference type="Araport" id="AT2G18800"/>
<dbReference type="TAIR" id="AT2G18800">
    <property type="gene designation" value="XTH21"/>
</dbReference>
<dbReference type="eggNOG" id="ENOG502R75F">
    <property type="taxonomic scope" value="Eukaryota"/>
</dbReference>
<dbReference type="HOGENOM" id="CLU_048041_0_0_1"/>
<dbReference type="InParanoid" id="Q9ZV40"/>
<dbReference type="OMA" id="ASFMNYN"/>
<dbReference type="PhylomeDB" id="Q9ZV40"/>
<dbReference type="BioCyc" id="ARA:AT2G18800-MONOMER"/>
<dbReference type="BRENDA" id="2.4.1.207">
    <property type="organism ID" value="399"/>
</dbReference>
<dbReference type="PRO" id="PR:Q9ZV40"/>
<dbReference type="Proteomes" id="UP000006548">
    <property type="component" value="Chromosome 2"/>
</dbReference>
<dbReference type="ExpressionAtlas" id="Q9ZV40">
    <property type="expression patterns" value="baseline and differential"/>
</dbReference>
<dbReference type="GO" id="GO:0048046">
    <property type="term" value="C:apoplast"/>
    <property type="evidence" value="ECO:0007669"/>
    <property type="project" value="UniProtKB-SubCell"/>
</dbReference>
<dbReference type="GO" id="GO:0004553">
    <property type="term" value="F:hydrolase activity, hydrolyzing O-glycosyl compounds"/>
    <property type="evidence" value="ECO:0007669"/>
    <property type="project" value="InterPro"/>
</dbReference>
<dbReference type="GO" id="GO:0030247">
    <property type="term" value="F:polysaccharide binding"/>
    <property type="evidence" value="ECO:0000250"/>
    <property type="project" value="UniProtKB"/>
</dbReference>
<dbReference type="GO" id="GO:0016762">
    <property type="term" value="F:xyloglucan:xyloglucosyl transferase activity"/>
    <property type="evidence" value="ECO:0000314"/>
    <property type="project" value="TAIR"/>
</dbReference>
<dbReference type="GO" id="GO:0042546">
    <property type="term" value="P:cell wall biogenesis"/>
    <property type="evidence" value="ECO:0007669"/>
    <property type="project" value="InterPro"/>
</dbReference>
<dbReference type="GO" id="GO:0042545">
    <property type="term" value="P:cell wall modification"/>
    <property type="evidence" value="ECO:0000315"/>
    <property type="project" value="TAIR"/>
</dbReference>
<dbReference type="GO" id="GO:0080022">
    <property type="term" value="P:primary root development"/>
    <property type="evidence" value="ECO:0000315"/>
    <property type="project" value="TAIR"/>
</dbReference>
<dbReference type="GO" id="GO:0010411">
    <property type="term" value="P:xyloglucan metabolic process"/>
    <property type="evidence" value="ECO:0007669"/>
    <property type="project" value="InterPro"/>
</dbReference>
<dbReference type="CDD" id="cd02176">
    <property type="entry name" value="GH16_XET"/>
    <property type="match status" value="1"/>
</dbReference>
<dbReference type="FunFam" id="2.60.120.200:FF:000025">
    <property type="entry name" value="Xyloglucan endotransglucosylase/hydrolase"/>
    <property type="match status" value="1"/>
</dbReference>
<dbReference type="Gene3D" id="2.60.120.200">
    <property type="match status" value="1"/>
</dbReference>
<dbReference type="InterPro" id="IPR044791">
    <property type="entry name" value="Beta-glucanase/XTH"/>
</dbReference>
<dbReference type="InterPro" id="IPR013320">
    <property type="entry name" value="ConA-like_dom_sf"/>
</dbReference>
<dbReference type="InterPro" id="IPR000757">
    <property type="entry name" value="GH16"/>
</dbReference>
<dbReference type="InterPro" id="IPR008263">
    <property type="entry name" value="GH16_AS"/>
</dbReference>
<dbReference type="InterPro" id="IPR010713">
    <property type="entry name" value="XET_C"/>
</dbReference>
<dbReference type="InterPro" id="IPR016455">
    <property type="entry name" value="XTH"/>
</dbReference>
<dbReference type="PANTHER" id="PTHR31062">
    <property type="entry name" value="XYLOGLUCAN ENDOTRANSGLUCOSYLASE/HYDROLASE PROTEIN 8-RELATED"/>
    <property type="match status" value="1"/>
</dbReference>
<dbReference type="Pfam" id="PF00722">
    <property type="entry name" value="Glyco_hydro_16"/>
    <property type="match status" value="1"/>
</dbReference>
<dbReference type="Pfam" id="PF06955">
    <property type="entry name" value="XET_C"/>
    <property type="match status" value="1"/>
</dbReference>
<dbReference type="PIRSF" id="PIRSF005604">
    <property type="entry name" value="XET"/>
    <property type="match status" value="1"/>
</dbReference>
<dbReference type="SUPFAM" id="SSF49899">
    <property type="entry name" value="Concanavalin A-like lectins/glucanases"/>
    <property type="match status" value="1"/>
</dbReference>
<dbReference type="PROSITE" id="PS01034">
    <property type="entry name" value="GH16_1"/>
    <property type="match status" value="1"/>
</dbReference>
<dbReference type="PROSITE" id="PS51762">
    <property type="entry name" value="GH16_2"/>
    <property type="match status" value="1"/>
</dbReference>
<proteinExistence type="evidence at transcript level"/>
<keyword id="KW-0052">Apoplast</keyword>
<keyword id="KW-0134">Cell wall</keyword>
<keyword id="KW-0961">Cell wall biogenesis/degradation</keyword>
<keyword id="KW-1015">Disulfide bond</keyword>
<keyword id="KW-0325">Glycoprotein</keyword>
<keyword id="KW-0326">Glycosidase</keyword>
<keyword id="KW-0378">Hydrolase</keyword>
<keyword id="KW-1185">Reference proteome</keyword>
<keyword id="KW-0964">Secreted</keyword>
<keyword id="KW-0732">Signal</keyword>
<keyword id="KW-0808">Transferase</keyword>